<protein>
    <recommendedName>
        <fullName evidence="1">GMP synthase [glutamine-hydrolyzing]</fullName>
        <ecNumber evidence="1">6.3.5.2</ecNumber>
    </recommendedName>
    <alternativeName>
        <fullName evidence="1">GMP synthetase</fullName>
    </alternativeName>
    <alternativeName>
        <fullName evidence="1">Glutamine amidotransferase</fullName>
    </alternativeName>
</protein>
<comment type="function">
    <text evidence="1">Catalyzes the synthesis of GMP from XMP.</text>
</comment>
<comment type="catalytic activity">
    <reaction evidence="1">
        <text>XMP + L-glutamine + ATP + H2O = GMP + L-glutamate + AMP + diphosphate + 2 H(+)</text>
        <dbReference type="Rhea" id="RHEA:11680"/>
        <dbReference type="ChEBI" id="CHEBI:15377"/>
        <dbReference type="ChEBI" id="CHEBI:15378"/>
        <dbReference type="ChEBI" id="CHEBI:29985"/>
        <dbReference type="ChEBI" id="CHEBI:30616"/>
        <dbReference type="ChEBI" id="CHEBI:33019"/>
        <dbReference type="ChEBI" id="CHEBI:57464"/>
        <dbReference type="ChEBI" id="CHEBI:58115"/>
        <dbReference type="ChEBI" id="CHEBI:58359"/>
        <dbReference type="ChEBI" id="CHEBI:456215"/>
        <dbReference type="EC" id="6.3.5.2"/>
    </reaction>
</comment>
<comment type="pathway">
    <text evidence="1">Purine metabolism; GMP biosynthesis; GMP from XMP (L-Gln route): step 1/1.</text>
</comment>
<comment type="subunit">
    <text evidence="1">Homodimer.</text>
</comment>
<keyword id="KW-0067">ATP-binding</keyword>
<keyword id="KW-0315">Glutamine amidotransferase</keyword>
<keyword id="KW-0332">GMP biosynthesis</keyword>
<keyword id="KW-0436">Ligase</keyword>
<keyword id="KW-0547">Nucleotide-binding</keyword>
<keyword id="KW-0658">Purine biosynthesis</keyword>
<keyword id="KW-1185">Reference proteome</keyword>
<gene>
    <name evidence="1" type="primary">guaA</name>
    <name type="ordered locus">CJA_2103</name>
</gene>
<name>GUAA_CELJU</name>
<organism>
    <name type="scientific">Cellvibrio japonicus (strain Ueda107)</name>
    <name type="common">Pseudomonas fluorescens subsp. cellulosa</name>
    <dbReference type="NCBI Taxonomy" id="498211"/>
    <lineage>
        <taxon>Bacteria</taxon>
        <taxon>Pseudomonadati</taxon>
        <taxon>Pseudomonadota</taxon>
        <taxon>Gammaproteobacteria</taxon>
        <taxon>Cellvibrionales</taxon>
        <taxon>Cellvibrionaceae</taxon>
        <taxon>Cellvibrio</taxon>
    </lineage>
</organism>
<reference key="1">
    <citation type="journal article" date="2008" name="J. Bacteriol.">
        <title>Insights into plant cell wall degradation from the genome sequence of the soil bacterium Cellvibrio japonicus.</title>
        <authorList>
            <person name="DeBoy R.T."/>
            <person name="Mongodin E.F."/>
            <person name="Fouts D.E."/>
            <person name="Tailford L.E."/>
            <person name="Khouri H."/>
            <person name="Emerson J.B."/>
            <person name="Mohamoud Y."/>
            <person name="Watkins K."/>
            <person name="Henrissat B."/>
            <person name="Gilbert H.J."/>
            <person name="Nelson K.E."/>
        </authorList>
    </citation>
    <scope>NUCLEOTIDE SEQUENCE [LARGE SCALE GENOMIC DNA]</scope>
    <source>
        <strain>Ueda107</strain>
    </source>
</reference>
<feature type="chain" id="PRO_1000120250" description="GMP synthase [glutamine-hydrolyzing]">
    <location>
        <begin position="1"/>
        <end position="525"/>
    </location>
</feature>
<feature type="domain" description="Glutamine amidotransferase type-1" evidence="1">
    <location>
        <begin position="9"/>
        <end position="207"/>
    </location>
</feature>
<feature type="domain" description="GMPS ATP-PPase" evidence="1">
    <location>
        <begin position="208"/>
        <end position="400"/>
    </location>
</feature>
<feature type="active site" description="Nucleophile" evidence="1">
    <location>
        <position position="86"/>
    </location>
</feature>
<feature type="active site" evidence="1">
    <location>
        <position position="181"/>
    </location>
</feature>
<feature type="active site" evidence="1">
    <location>
        <position position="183"/>
    </location>
</feature>
<feature type="binding site" evidence="1">
    <location>
        <begin position="235"/>
        <end position="241"/>
    </location>
    <ligand>
        <name>ATP</name>
        <dbReference type="ChEBI" id="CHEBI:30616"/>
    </ligand>
</feature>
<dbReference type="EC" id="6.3.5.2" evidence="1"/>
<dbReference type="EMBL" id="CP000934">
    <property type="protein sequence ID" value="ACE84199.1"/>
    <property type="molecule type" value="Genomic_DNA"/>
</dbReference>
<dbReference type="RefSeq" id="WP_012487705.1">
    <property type="nucleotide sequence ID" value="NC_010995.1"/>
</dbReference>
<dbReference type="SMR" id="B3PIG3"/>
<dbReference type="STRING" id="498211.CJA_2103"/>
<dbReference type="MEROPS" id="C26.957"/>
<dbReference type="KEGG" id="cja:CJA_2103"/>
<dbReference type="eggNOG" id="COG0518">
    <property type="taxonomic scope" value="Bacteria"/>
</dbReference>
<dbReference type="eggNOG" id="COG0519">
    <property type="taxonomic scope" value="Bacteria"/>
</dbReference>
<dbReference type="HOGENOM" id="CLU_014340_0_5_6"/>
<dbReference type="OrthoDB" id="9802219at2"/>
<dbReference type="UniPathway" id="UPA00189">
    <property type="reaction ID" value="UER00296"/>
</dbReference>
<dbReference type="Proteomes" id="UP000001036">
    <property type="component" value="Chromosome"/>
</dbReference>
<dbReference type="GO" id="GO:0005829">
    <property type="term" value="C:cytosol"/>
    <property type="evidence" value="ECO:0007669"/>
    <property type="project" value="TreeGrafter"/>
</dbReference>
<dbReference type="GO" id="GO:0005524">
    <property type="term" value="F:ATP binding"/>
    <property type="evidence" value="ECO:0007669"/>
    <property type="project" value="UniProtKB-UniRule"/>
</dbReference>
<dbReference type="GO" id="GO:0003921">
    <property type="term" value="F:GMP synthase activity"/>
    <property type="evidence" value="ECO:0007669"/>
    <property type="project" value="InterPro"/>
</dbReference>
<dbReference type="CDD" id="cd01742">
    <property type="entry name" value="GATase1_GMP_Synthase"/>
    <property type="match status" value="1"/>
</dbReference>
<dbReference type="CDD" id="cd01997">
    <property type="entry name" value="GMP_synthase_C"/>
    <property type="match status" value="1"/>
</dbReference>
<dbReference type="FunFam" id="3.30.300.10:FF:000002">
    <property type="entry name" value="GMP synthase [glutamine-hydrolyzing]"/>
    <property type="match status" value="1"/>
</dbReference>
<dbReference type="FunFam" id="3.40.50.620:FF:000001">
    <property type="entry name" value="GMP synthase [glutamine-hydrolyzing]"/>
    <property type="match status" value="1"/>
</dbReference>
<dbReference type="FunFam" id="3.40.50.880:FF:000001">
    <property type="entry name" value="GMP synthase [glutamine-hydrolyzing]"/>
    <property type="match status" value="1"/>
</dbReference>
<dbReference type="Gene3D" id="3.30.300.10">
    <property type="match status" value="1"/>
</dbReference>
<dbReference type="Gene3D" id="3.40.50.880">
    <property type="match status" value="1"/>
</dbReference>
<dbReference type="Gene3D" id="3.40.50.620">
    <property type="entry name" value="HUPs"/>
    <property type="match status" value="1"/>
</dbReference>
<dbReference type="HAMAP" id="MF_00344">
    <property type="entry name" value="GMP_synthase"/>
    <property type="match status" value="1"/>
</dbReference>
<dbReference type="InterPro" id="IPR029062">
    <property type="entry name" value="Class_I_gatase-like"/>
</dbReference>
<dbReference type="InterPro" id="IPR017926">
    <property type="entry name" value="GATASE"/>
</dbReference>
<dbReference type="InterPro" id="IPR001674">
    <property type="entry name" value="GMP_synth_C"/>
</dbReference>
<dbReference type="InterPro" id="IPR004739">
    <property type="entry name" value="GMP_synth_GATase"/>
</dbReference>
<dbReference type="InterPro" id="IPR022955">
    <property type="entry name" value="GMP_synthase"/>
</dbReference>
<dbReference type="InterPro" id="IPR025777">
    <property type="entry name" value="GMPS_ATP_PPase_dom"/>
</dbReference>
<dbReference type="InterPro" id="IPR022310">
    <property type="entry name" value="NAD/GMP_synthase"/>
</dbReference>
<dbReference type="InterPro" id="IPR014729">
    <property type="entry name" value="Rossmann-like_a/b/a_fold"/>
</dbReference>
<dbReference type="NCBIfam" id="TIGR00884">
    <property type="entry name" value="guaA_Cterm"/>
    <property type="match status" value="1"/>
</dbReference>
<dbReference type="NCBIfam" id="TIGR00888">
    <property type="entry name" value="guaA_Nterm"/>
    <property type="match status" value="1"/>
</dbReference>
<dbReference type="NCBIfam" id="NF000848">
    <property type="entry name" value="PRK00074.1"/>
    <property type="match status" value="1"/>
</dbReference>
<dbReference type="PANTHER" id="PTHR11922:SF2">
    <property type="entry name" value="GMP SYNTHASE [GLUTAMINE-HYDROLYZING]"/>
    <property type="match status" value="1"/>
</dbReference>
<dbReference type="PANTHER" id="PTHR11922">
    <property type="entry name" value="GMP SYNTHASE-RELATED"/>
    <property type="match status" value="1"/>
</dbReference>
<dbReference type="Pfam" id="PF00117">
    <property type="entry name" value="GATase"/>
    <property type="match status" value="1"/>
</dbReference>
<dbReference type="Pfam" id="PF00958">
    <property type="entry name" value="GMP_synt_C"/>
    <property type="match status" value="1"/>
</dbReference>
<dbReference type="Pfam" id="PF02540">
    <property type="entry name" value="NAD_synthase"/>
    <property type="match status" value="1"/>
</dbReference>
<dbReference type="PRINTS" id="PR00097">
    <property type="entry name" value="ANTSNTHASEII"/>
</dbReference>
<dbReference type="PRINTS" id="PR00099">
    <property type="entry name" value="CPSGATASE"/>
</dbReference>
<dbReference type="PRINTS" id="PR00096">
    <property type="entry name" value="GATASE"/>
</dbReference>
<dbReference type="SUPFAM" id="SSF52402">
    <property type="entry name" value="Adenine nucleotide alpha hydrolases-like"/>
    <property type="match status" value="1"/>
</dbReference>
<dbReference type="SUPFAM" id="SSF52317">
    <property type="entry name" value="Class I glutamine amidotransferase-like"/>
    <property type="match status" value="1"/>
</dbReference>
<dbReference type="SUPFAM" id="SSF54810">
    <property type="entry name" value="GMP synthetase C-terminal dimerisation domain"/>
    <property type="match status" value="1"/>
</dbReference>
<dbReference type="PROSITE" id="PS51273">
    <property type="entry name" value="GATASE_TYPE_1"/>
    <property type="match status" value="1"/>
</dbReference>
<dbReference type="PROSITE" id="PS51553">
    <property type="entry name" value="GMPS_ATP_PPASE"/>
    <property type="match status" value="1"/>
</dbReference>
<sequence length="525" mass="58348">MTHDIHAQRILILDFGSQYTQLIARRVREIGVFSEIRAWDMSDDEIRAYKPSGIILAGGPESTTEEEAPRAPEAVFALGVPVLGICYGMQTMAMQMGGWVESSAIREFGYAQIKAHGQSSLLQDIKDHVDQDGSALLDVWMSHGDKVTKMPEGFELMASTPSCPIAGMYNEAKKFYGVQFHPEVTHTLQGKRLFEHFVLQLCACEKLWTPANIVEDAIKKVREQVGTDKVLLGLSGGVDSSVVAALLHRAIGDQLTCVFVDNGLLRKNEGDQVMDMFAKNMGVRVIRADAEQLFLGKLAGVSDPEKKRKIIGGTFIDVFDTEATKLQEVKWLAQGTIYPDVIESAAAKTGKAHVIKSHHNVGGLPEDMAFKLVEPLRELFKDEVRAIGLELGLPYDMVYRHPFPGPGLGVRILGEVKKEYADILREADAIFLEELRAADWYHKTSQAFAVFLPVKSVGVVGDGRRYEWVISLRAVETVDFMTARWAHLPYELLEKVSNRIINEISGVSRVCYDVSSKPPATIEWE</sequence>
<accession>B3PIG3</accession>
<proteinExistence type="inferred from homology"/>
<evidence type="ECO:0000255" key="1">
    <source>
        <dbReference type="HAMAP-Rule" id="MF_00344"/>
    </source>
</evidence>